<feature type="chain" id="PRO_0000418072" description="CRISPR system CMR subunit Cmr1">
    <location>
        <begin position="1"/>
        <end position="467"/>
    </location>
</feature>
<evidence type="ECO:0000250" key="1"/>
<evidence type="ECO:0000269" key="2">
    <source>
    </source>
</evidence>
<evidence type="ECO:0000305" key="3"/>
<proteinExistence type="evidence at protein level"/>
<gene>
    <name type="primary">cmr1</name>
    <name type="ordered locus">SSO1989</name>
</gene>
<protein>
    <recommendedName>
        <fullName>CRISPR system CMR subunit Cmr1</fullName>
    </recommendedName>
    <alternativeName>
        <fullName>Type III-B/RAMP module RAMP protein Cmr1</fullName>
    </alternativeName>
</protein>
<reference key="1">
    <citation type="journal article" date="2001" name="Proc. Natl. Acad. Sci. U.S.A.">
        <title>The complete genome of the crenarchaeon Sulfolobus solfataricus P2.</title>
        <authorList>
            <person name="She Q."/>
            <person name="Singh R.K."/>
            <person name="Confalonieri F."/>
            <person name="Zivanovic Y."/>
            <person name="Allard G."/>
            <person name="Awayez M.J."/>
            <person name="Chan-Weiher C.C.-Y."/>
            <person name="Clausen I.G."/>
            <person name="Curtis B.A."/>
            <person name="De Moors A."/>
            <person name="Erauso G."/>
            <person name="Fletcher C."/>
            <person name="Gordon P.M.K."/>
            <person name="Heikamp-de Jong I."/>
            <person name="Jeffries A.C."/>
            <person name="Kozera C.J."/>
            <person name="Medina N."/>
            <person name="Peng X."/>
            <person name="Thi-Ngoc H.P."/>
            <person name="Redder P."/>
            <person name="Schenk M.E."/>
            <person name="Theriault C."/>
            <person name="Tolstrup N."/>
            <person name="Charlebois R.L."/>
            <person name="Doolittle W.F."/>
            <person name="Duguet M."/>
            <person name="Gaasterland T."/>
            <person name="Garrett R.A."/>
            <person name="Ragan M.A."/>
            <person name="Sensen C.W."/>
            <person name="Van der Oost J."/>
        </authorList>
    </citation>
    <scope>NUCLEOTIDE SEQUENCE [LARGE SCALE GENOMIC DNA]</scope>
    <source>
        <strain>ATCC 35092 / DSM 1617 / JCM 11322 / P2</strain>
    </source>
</reference>
<reference key="2">
    <citation type="journal article" date="2012" name="Mol. Cell">
        <title>Structure and mechanism of the CMR complex for CRISPR-mediated antiviral immunity.</title>
        <authorList>
            <person name="Zhang J."/>
            <person name="Rouillon C."/>
            <person name="Kerou M."/>
            <person name="Reeks J."/>
            <person name="Brugger K."/>
            <person name="Graham S."/>
            <person name="Reimann J."/>
            <person name="Cannone G."/>
            <person name="Liu H."/>
            <person name="Albers S.V."/>
            <person name="Naismith J.H."/>
            <person name="Spagnolo L."/>
            <person name="White M.F."/>
        </authorList>
    </citation>
    <scope>IDENTIFICATION BY MASS SPECTROMETRY</scope>
    <scope>FUNCTION IN CMR COMPLEX</scope>
    <scope>SUBUNIT</scope>
    <scope>SUBCELLULAR LOCATION</scope>
    <source>
        <strain>ATCC 35092 / DSM 1617 / JCM 11322 / P2</strain>
    </source>
</reference>
<keyword id="KW-0051">Antiviral defense</keyword>
<keyword id="KW-0963">Cytoplasm</keyword>
<keyword id="KW-1185">Reference proteome</keyword>
<dbReference type="EMBL" id="AE006641">
    <property type="protein sequence ID" value="AAK42179.1"/>
    <property type="molecule type" value="Genomic_DNA"/>
</dbReference>
<dbReference type="RefSeq" id="WP_009992994.1">
    <property type="nucleotide sequence ID" value="NC_002754.1"/>
</dbReference>
<dbReference type="SMR" id="Q97WX2"/>
<dbReference type="STRING" id="273057.SSO1989"/>
<dbReference type="PaxDb" id="273057-SSO1989"/>
<dbReference type="EnsemblBacteria" id="AAK42179">
    <property type="protein sequence ID" value="AAK42179"/>
    <property type="gene ID" value="SSO1989"/>
</dbReference>
<dbReference type="GeneID" id="27428315"/>
<dbReference type="KEGG" id="sso:SSO1989"/>
<dbReference type="PATRIC" id="fig|273057.12.peg.2065"/>
<dbReference type="eggNOG" id="arCOG03893">
    <property type="taxonomic scope" value="Archaea"/>
</dbReference>
<dbReference type="HOGENOM" id="CLU_584790_0_0_2"/>
<dbReference type="InParanoid" id="Q97WX2"/>
<dbReference type="Proteomes" id="UP000001974">
    <property type="component" value="Chromosome"/>
</dbReference>
<dbReference type="GO" id="GO:0005737">
    <property type="term" value="C:cytoplasm"/>
    <property type="evidence" value="ECO:0007669"/>
    <property type="project" value="UniProtKB-SubCell"/>
</dbReference>
<dbReference type="GO" id="GO:0051607">
    <property type="term" value="P:defense response to virus"/>
    <property type="evidence" value="ECO:0007669"/>
    <property type="project" value="UniProtKB-KW"/>
</dbReference>
<dbReference type="CDD" id="cd09657">
    <property type="entry name" value="Cmr1_III-B"/>
    <property type="match status" value="1"/>
</dbReference>
<dbReference type="InterPro" id="IPR007522">
    <property type="entry name" value="CRISPR-assoc_prot_TM1795"/>
</dbReference>
<dbReference type="InterPro" id="IPR005537">
    <property type="entry name" value="RAMP_III_fam"/>
</dbReference>
<dbReference type="NCBIfam" id="TIGR01894">
    <property type="entry name" value="cas_TM1795_cmr1"/>
    <property type="match status" value="1"/>
</dbReference>
<dbReference type="Pfam" id="PF03787">
    <property type="entry name" value="RAMPs"/>
    <property type="match status" value="1"/>
</dbReference>
<organism>
    <name type="scientific">Saccharolobus solfataricus (strain ATCC 35092 / DSM 1617 / JCM 11322 / P2)</name>
    <name type="common">Sulfolobus solfataricus</name>
    <dbReference type="NCBI Taxonomy" id="273057"/>
    <lineage>
        <taxon>Archaea</taxon>
        <taxon>Thermoproteota</taxon>
        <taxon>Thermoprotei</taxon>
        <taxon>Sulfolobales</taxon>
        <taxon>Sulfolobaceae</taxon>
        <taxon>Saccharolobus</taxon>
    </lineage>
</organism>
<name>CMR1_SACS2</name>
<sequence>MEELLMSFKLKAIYPLTGGYNRHSINEFYEENVRPTEIKGLWRWWNRVLFNTVSYVKEGKLYTYDSIDRLFEDVFGSENKKSAVRLEVITDEGSDNHFELSNVELDNVIDCLKANREEKVNLDFRDNTLIIEIEGSTKIPISFKSNLDIDKIKDLVYKNKLLSFELLGFKSIKIDTKISDKEVIKEILRDLITNYLEYFNIKQEVTFTLNIYLDKSLKHKQNFDAKLKFALHSLLVFILLGGIGRKTSRGFGGLSIVNAECHDGLCGEIYGIVNNMESEKEKKDLATVLPNIIFSQTIEQYFSELINNESYKLRSWNNNSDFFVYYFIKDINILRINRIDTNVNRNGIENILNRISNELSASGNCLKDLIMQEMRRRAFALAFLGNRKFRNIHEIYPRILEFLYANYIKREFVNLIGKERRLSNLRFKILEINNTYYIISYLLYSSYLKDPNSSIKDTLYQFARCVI</sequence>
<accession>Q97WX2</accession>
<comment type="function">
    <text evidence="1 2">CRISPR (clustered regularly interspaced short palindromic repeat) is an adaptive immune system that provides protection against mobile genetic elements (viruses, transposable elements and conjugative plasmids). CRISPR clusters contain spacers, sequences complementary to antecedent mobile elements, and target invading nucleic acids. CRISPR clusters are transcribed and processed into CRISPR RNA (crRNA) (By similarity). The CMR complex degrades RNA complementary to the crRNA (target RNA) within UA dinucleotides, generating 3'-OH and 5'-phosphate ends. Activity is dependent on the 8 nt long 5' tag in the crRNA, an unpaired 3' flag on the target RNA, and is stimulated by ATP. Some cleavage of the guide crRNA can also be observed.</text>
</comment>
<comment type="subunit">
    <text evidence="2">Part of the CMR ribonucleoprotein complex, consisting of crRNA plus Cmr1/Cmr2/Cmr3/Cmr4/Cmr5/Cmr6 at 1:1 and possibly 3 Cmr7 dimers. A Cmr2/Cmr3/Cmr7 subcomplex without crRNA can also be isolated. It does not cleave target RNA.</text>
</comment>
<comment type="subcellular location">
    <subcellularLocation>
        <location evidence="2">Cytoplasm</location>
    </subcellularLocation>
</comment>
<comment type="similarity">
    <text evidence="3">Belongs to the CRISPR system Cmr1 family.</text>
</comment>